<proteinExistence type="inferred from homology"/>
<organism>
    <name type="scientific">Escherichia coli (strain SE11)</name>
    <dbReference type="NCBI Taxonomy" id="409438"/>
    <lineage>
        <taxon>Bacteria</taxon>
        <taxon>Pseudomonadati</taxon>
        <taxon>Pseudomonadota</taxon>
        <taxon>Gammaproteobacteria</taxon>
        <taxon>Enterobacterales</taxon>
        <taxon>Enterobacteriaceae</taxon>
        <taxon>Escherichia</taxon>
    </lineage>
</organism>
<name>ARAA_ECOSE</name>
<sequence length="500" mass="56103">MTIFDNYEVWFVIGSQHLYGPETLRQVTQHAEHVVNALNTEAKLPCKLVLKPLGTTPDEITAICRDANYDDRCAGLVVWLHTFSPAKMWINGLTMLNKPLLQFHTQFNAALPWDSIDMDFMNLNQTAHGGREFGFIGARMRQQHAVVTGHWQDKQAHERIGSWMRQAVSKQDTRHLKVCRFGDNMREVAVTDGDKVAAQIKFGFSVNTWAVGDLVQVVNSISDGDVNALVDEYESCYTMTPATQIHGEKRQNVLEAARIELGMKRFLEQGGFHAFTTTFEDLHGLKQLPGLAVQRLMQQGYGFAGEGDWKTAALLRIMKVMSTGLQGGTSFMEDYTYHFEKGNDLVLGSHMLEVCPSIAVEEKPILDVQHLGIGGKDDPARLIFNTQTGPAIVASLIDLGDRYRLLVNCIDTVKTPHSLPKLPVANALWKAQPDLPTASEAWILAGGAHHTVFSHALNLNDMRQFAEMHDIEITVIDNDTRLPAFKDALRWNEVYYGFRR</sequence>
<comment type="function">
    <text evidence="1">Catalyzes the conversion of L-arabinose to L-ribulose.</text>
</comment>
<comment type="catalytic activity">
    <reaction evidence="1">
        <text>beta-L-arabinopyranose = L-ribulose</text>
        <dbReference type="Rhea" id="RHEA:14821"/>
        <dbReference type="ChEBI" id="CHEBI:16880"/>
        <dbReference type="ChEBI" id="CHEBI:40886"/>
        <dbReference type="EC" id="5.3.1.4"/>
    </reaction>
</comment>
<comment type="cofactor">
    <cofactor evidence="1">
        <name>Mn(2+)</name>
        <dbReference type="ChEBI" id="CHEBI:29035"/>
    </cofactor>
    <text evidence="1">Binds 1 Mn(2+) ion per subunit.</text>
</comment>
<comment type="pathway">
    <text evidence="1">Carbohydrate degradation; L-arabinose degradation via L-ribulose; D-xylulose 5-phosphate from L-arabinose (bacterial route): step 1/3.</text>
</comment>
<comment type="subunit">
    <text evidence="1">Homohexamer.</text>
</comment>
<comment type="similarity">
    <text evidence="1">Belongs to the arabinose isomerase family.</text>
</comment>
<evidence type="ECO:0000255" key="1">
    <source>
        <dbReference type="HAMAP-Rule" id="MF_00519"/>
    </source>
</evidence>
<protein>
    <recommendedName>
        <fullName evidence="1">L-arabinose isomerase</fullName>
        <ecNumber evidence="1">5.3.1.4</ecNumber>
    </recommendedName>
</protein>
<dbReference type="EC" id="5.3.1.4" evidence="1"/>
<dbReference type="EMBL" id="AP009240">
    <property type="protein sequence ID" value="BAG75586.1"/>
    <property type="molecule type" value="Genomic_DNA"/>
</dbReference>
<dbReference type="RefSeq" id="WP_000151734.1">
    <property type="nucleotide sequence ID" value="NC_011415.1"/>
</dbReference>
<dbReference type="SMR" id="B6HZ42"/>
<dbReference type="GeneID" id="93777375"/>
<dbReference type="KEGG" id="ecy:ECSE_0062"/>
<dbReference type="HOGENOM" id="CLU_045663_0_0_6"/>
<dbReference type="UniPathway" id="UPA00145">
    <property type="reaction ID" value="UER00565"/>
</dbReference>
<dbReference type="Proteomes" id="UP000008199">
    <property type="component" value="Chromosome"/>
</dbReference>
<dbReference type="GO" id="GO:0005829">
    <property type="term" value="C:cytosol"/>
    <property type="evidence" value="ECO:0007669"/>
    <property type="project" value="TreeGrafter"/>
</dbReference>
<dbReference type="GO" id="GO:0008733">
    <property type="term" value="F:L-arabinose isomerase activity"/>
    <property type="evidence" value="ECO:0007669"/>
    <property type="project" value="UniProtKB-UniRule"/>
</dbReference>
<dbReference type="GO" id="GO:0030145">
    <property type="term" value="F:manganese ion binding"/>
    <property type="evidence" value="ECO:0007669"/>
    <property type="project" value="UniProtKB-UniRule"/>
</dbReference>
<dbReference type="GO" id="GO:0019569">
    <property type="term" value="P:L-arabinose catabolic process to xylulose 5-phosphate"/>
    <property type="evidence" value="ECO:0007669"/>
    <property type="project" value="UniProtKB-UniRule"/>
</dbReference>
<dbReference type="CDD" id="cd03557">
    <property type="entry name" value="L-arabinose_isomerase"/>
    <property type="match status" value="1"/>
</dbReference>
<dbReference type="FunFam" id="3.40.50.10940:FF:000001">
    <property type="entry name" value="L-arabinose isomerase"/>
    <property type="match status" value="1"/>
</dbReference>
<dbReference type="Gene3D" id="3.40.50.10940">
    <property type="match status" value="1"/>
</dbReference>
<dbReference type="HAMAP" id="MF_00519">
    <property type="entry name" value="Arabinose_Isome"/>
    <property type="match status" value="1"/>
</dbReference>
<dbReference type="InterPro" id="IPR024664">
    <property type="entry name" value="Ara_Isoase_C"/>
</dbReference>
<dbReference type="InterPro" id="IPR055390">
    <property type="entry name" value="AraA_central"/>
</dbReference>
<dbReference type="InterPro" id="IPR055389">
    <property type="entry name" value="AraA_N"/>
</dbReference>
<dbReference type="InterPro" id="IPR038583">
    <property type="entry name" value="AraA_N_sf"/>
</dbReference>
<dbReference type="InterPro" id="IPR004216">
    <property type="entry name" value="Fuc/Ara_isomerase_C"/>
</dbReference>
<dbReference type="InterPro" id="IPR009015">
    <property type="entry name" value="Fucose_isomerase_N/cen_sf"/>
</dbReference>
<dbReference type="InterPro" id="IPR003762">
    <property type="entry name" value="Lara_isomerase"/>
</dbReference>
<dbReference type="NCBIfam" id="NF002795">
    <property type="entry name" value="PRK02929.1"/>
    <property type="match status" value="1"/>
</dbReference>
<dbReference type="PANTHER" id="PTHR38464">
    <property type="entry name" value="L-ARABINOSE ISOMERASE"/>
    <property type="match status" value="1"/>
</dbReference>
<dbReference type="PANTHER" id="PTHR38464:SF1">
    <property type="entry name" value="L-ARABINOSE ISOMERASE"/>
    <property type="match status" value="1"/>
</dbReference>
<dbReference type="Pfam" id="PF24856">
    <property type="entry name" value="AraA_central"/>
    <property type="match status" value="1"/>
</dbReference>
<dbReference type="Pfam" id="PF02610">
    <property type="entry name" value="AraA_N"/>
    <property type="match status" value="1"/>
</dbReference>
<dbReference type="Pfam" id="PF11762">
    <property type="entry name" value="Arabinose_Iso_C"/>
    <property type="match status" value="1"/>
</dbReference>
<dbReference type="PIRSF" id="PIRSF001478">
    <property type="entry name" value="L-ara_isomerase"/>
    <property type="match status" value="1"/>
</dbReference>
<dbReference type="SUPFAM" id="SSF50443">
    <property type="entry name" value="FucI/AraA C-terminal domain-like"/>
    <property type="match status" value="1"/>
</dbReference>
<dbReference type="SUPFAM" id="SSF53743">
    <property type="entry name" value="FucI/AraA N-terminal and middle domains"/>
    <property type="match status" value="1"/>
</dbReference>
<gene>
    <name evidence="1" type="primary">araA</name>
    <name type="ordered locus">ECSE_0062</name>
</gene>
<feature type="chain" id="PRO_1000127604" description="L-arabinose isomerase">
    <location>
        <begin position="1"/>
        <end position="500"/>
    </location>
</feature>
<feature type="binding site" evidence="1">
    <location>
        <position position="306"/>
    </location>
    <ligand>
        <name>Mn(2+)</name>
        <dbReference type="ChEBI" id="CHEBI:29035"/>
    </ligand>
</feature>
<feature type="binding site" evidence="1">
    <location>
        <position position="333"/>
    </location>
    <ligand>
        <name>Mn(2+)</name>
        <dbReference type="ChEBI" id="CHEBI:29035"/>
    </ligand>
</feature>
<feature type="binding site" evidence="1">
    <location>
        <position position="350"/>
    </location>
    <ligand>
        <name>Mn(2+)</name>
        <dbReference type="ChEBI" id="CHEBI:29035"/>
    </ligand>
</feature>
<feature type="binding site" evidence="1">
    <location>
        <position position="450"/>
    </location>
    <ligand>
        <name>Mn(2+)</name>
        <dbReference type="ChEBI" id="CHEBI:29035"/>
    </ligand>
</feature>
<keyword id="KW-0054">Arabinose catabolism</keyword>
<keyword id="KW-0119">Carbohydrate metabolism</keyword>
<keyword id="KW-0413">Isomerase</keyword>
<keyword id="KW-0464">Manganese</keyword>
<keyword id="KW-0479">Metal-binding</keyword>
<accession>B6HZ42</accession>
<reference key="1">
    <citation type="journal article" date="2008" name="DNA Res.">
        <title>Complete genome sequence and comparative analysis of the wild-type commensal Escherichia coli strain SE11 isolated from a healthy adult.</title>
        <authorList>
            <person name="Oshima K."/>
            <person name="Toh H."/>
            <person name="Ogura Y."/>
            <person name="Sasamoto H."/>
            <person name="Morita H."/>
            <person name="Park S.-H."/>
            <person name="Ooka T."/>
            <person name="Iyoda S."/>
            <person name="Taylor T.D."/>
            <person name="Hayashi T."/>
            <person name="Itoh K."/>
            <person name="Hattori M."/>
        </authorList>
    </citation>
    <scope>NUCLEOTIDE SEQUENCE [LARGE SCALE GENOMIC DNA]</scope>
    <source>
        <strain>SE11</strain>
    </source>
</reference>